<organism>
    <name type="scientific">Stenotrophomonas maltophilia (strain K279a)</name>
    <dbReference type="NCBI Taxonomy" id="522373"/>
    <lineage>
        <taxon>Bacteria</taxon>
        <taxon>Pseudomonadati</taxon>
        <taxon>Pseudomonadota</taxon>
        <taxon>Gammaproteobacteria</taxon>
        <taxon>Lysobacterales</taxon>
        <taxon>Lysobacteraceae</taxon>
        <taxon>Stenotrophomonas</taxon>
        <taxon>Stenotrophomonas maltophilia group</taxon>
    </lineage>
</organism>
<feature type="chain" id="PRO_1000097222" description="Phosphoserine aminotransferase">
    <location>
        <begin position="1"/>
        <end position="361"/>
    </location>
</feature>
<feature type="binding site" evidence="1">
    <location>
        <position position="42"/>
    </location>
    <ligand>
        <name>L-glutamate</name>
        <dbReference type="ChEBI" id="CHEBI:29985"/>
    </ligand>
</feature>
<feature type="binding site" evidence="1">
    <location>
        <begin position="76"/>
        <end position="77"/>
    </location>
    <ligand>
        <name>pyridoxal 5'-phosphate</name>
        <dbReference type="ChEBI" id="CHEBI:597326"/>
    </ligand>
</feature>
<feature type="binding site" evidence="1">
    <location>
        <position position="102"/>
    </location>
    <ligand>
        <name>pyridoxal 5'-phosphate</name>
        <dbReference type="ChEBI" id="CHEBI:597326"/>
    </ligand>
</feature>
<feature type="binding site" evidence="1">
    <location>
        <position position="152"/>
    </location>
    <ligand>
        <name>pyridoxal 5'-phosphate</name>
        <dbReference type="ChEBI" id="CHEBI:597326"/>
    </ligand>
</feature>
<feature type="binding site" evidence="1">
    <location>
        <position position="172"/>
    </location>
    <ligand>
        <name>pyridoxal 5'-phosphate</name>
        <dbReference type="ChEBI" id="CHEBI:597326"/>
    </ligand>
</feature>
<feature type="binding site" evidence="1">
    <location>
        <position position="195"/>
    </location>
    <ligand>
        <name>pyridoxal 5'-phosphate</name>
        <dbReference type="ChEBI" id="CHEBI:597326"/>
    </ligand>
</feature>
<feature type="binding site" evidence="1">
    <location>
        <begin position="237"/>
        <end position="238"/>
    </location>
    <ligand>
        <name>pyridoxal 5'-phosphate</name>
        <dbReference type="ChEBI" id="CHEBI:597326"/>
    </ligand>
</feature>
<feature type="modified residue" description="N6-(pyridoxal phosphate)lysine" evidence="1">
    <location>
        <position position="196"/>
    </location>
</feature>
<feature type="strand" evidence="2">
    <location>
        <begin position="9"/>
        <end position="11"/>
    </location>
</feature>
<feature type="helix" evidence="2">
    <location>
        <begin position="16"/>
        <end position="25"/>
    </location>
</feature>
<feature type="helix" evidence="2">
    <location>
        <begin position="29"/>
        <end position="31"/>
    </location>
</feature>
<feature type="helix" evidence="2">
    <location>
        <begin position="36"/>
        <end position="38"/>
    </location>
</feature>
<feature type="helix" evidence="2">
    <location>
        <begin position="44"/>
        <end position="61"/>
    </location>
</feature>
<feature type="strand" evidence="2">
    <location>
        <begin position="67"/>
        <end position="74"/>
    </location>
</feature>
<feature type="helix" evidence="2">
    <location>
        <begin position="75"/>
        <end position="87"/>
    </location>
</feature>
<feature type="strand" evidence="2">
    <location>
        <begin position="93"/>
        <end position="100"/>
    </location>
</feature>
<feature type="helix" evidence="2">
    <location>
        <begin position="101"/>
        <end position="110"/>
    </location>
</feature>
<feature type="turn" evidence="2">
    <location>
        <begin position="111"/>
        <end position="113"/>
    </location>
</feature>
<feature type="strand" evidence="2">
    <location>
        <begin position="114"/>
        <end position="121"/>
    </location>
</feature>
<feature type="helix" evidence="2">
    <location>
        <begin position="123"/>
        <end position="125"/>
    </location>
</feature>
<feature type="helix" evidence="2">
    <location>
        <begin position="133"/>
        <end position="135"/>
    </location>
</feature>
<feature type="strand" evidence="2">
    <location>
        <begin position="145"/>
        <end position="151"/>
    </location>
</feature>
<feature type="turn" evidence="2">
    <location>
        <begin position="152"/>
        <end position="155"/>
    </location>
</feature>
<feature type="strand" evidence="2">
    <location>
        <begin position="169"/>
        <end position="172"/>
    </location>
</feature>
<feature type="turn" evidence="2">
    <location>
        <begin position="174"/>
        <end position="178"/>
    </location>
</feature>
<feature type="helix" evidence="2">
    <location>
        <begin position="184"/>
        <end position="186"/>
    </location>
</feature>
<feature type="strand" evidence="2">
    <location>
        <begin position="188"/>
        <end position="192"/>
    </location>
</feature>
<feature type="strand" evidence="2">
    <location>
        <begin position="194"/>
        <end position="196"/>
    </location>
</feature>
<feature type="strand" evidence="2">
    <location>
        <begin position="204"/>
        <end position="209"/>
    </location>
</feature>
<feature type="helix" evidence="2">
    <location>
        <begin position="210"/>
        <end position="214"/>
    </location>
</feature>
<feature type="helix" evidence="2">
    <location>
        <begin position="222"/>
        <end position="224"/>
    </location>
</feature>
<feature type="helix" evidence="2">
    <location>
        <begin position="226"/>
        <end position="231"/>
    </location>
</feature>
<feature type="turn" evidence="2">
    <location>
        <begin position="232"/>
        <end position="234"/>
    </location>
</feature>
<feature type="helix" evidence="2">
    <location>
        <begin position="241"/>
        <end position="256"/>
    </location>
</feature>
<feature type="helix" evidence="2">
    <location>
        <begin position="259"/>
        <end position="279"/>
    </location>
</feature>
<feature type="strand" evidence="2">
    <location>
        <begin position="284"/>
        <end position="286"/>
    </location>
</feature>
<feature type="helix" evidence="2">
    <location>
        <begin position="291"/>
        <end position="293"/>
    </location>
</feature>
<feature type="strand" evidence="2">
    <location>
        <begin position="296"/>
        <end position="302"/>
    </location>
</feature>
<feature type="helix" evidence="2">
    <location>
        <begin position="306"/>
        <end position="318"/>
    </location>
</feature>
<feature type="turn" evidence="2">
    <location>
        <begin position="328"/>
        <end position="330"/>
    </location>
</feature>
<feature type="strand" evidence="2">
    <location>
        <begin position="332"/>
        <end position="336"/>
    </location>
</feature>
<feature type="helix" evidence="2">
    <location>
        <begin position="343"/>
        <end position="360"/>
    </location>
</feature>
<reference key="1">
    <citation type="journal article" date="2008" name="Genome Biol.">
        <title>The complete genome, comparative and functional analysis of Stenotrophomonas maltophilia reveals an organism heavily shielded by drug resistance determinants.</title>
        <authorList>
            <person name="Crossman L.C."/>
            <person name="Gould V.C."/>
            <person name="Dow J.M."/>
            <person name="Vernikos G.S."/>
            <person name="Okazaki A."/>
            <person name="Sebaihia M."/>
            <person name="Saunders D."/>
            <person name="Arrowsmith C."/>
            <person name="Carver T."/>
            <person name="Peters N."/>
            <person name="Adlem E."/>
            <person name="Kerhornou A."/>
            <person name="Lord A."/>
            <person name="Murphy L."/>
            <person name="Seeger K."/>
            <person name="Squares R."/>
            <person name="Rutter S."/>
            <person name="Quail M.A."/>
            <person name="Rajandream M.A."/>
            <person name="Harris D."/>
            <person name="Churcher C."/>
            <person name="Bentley S.D."/>
            <person name="Parkhill J."/>
            <person name="Thomson N.R."/>
            <person name="Avison M.B."/>
        </authorList>
    </citation>
    <scope>NUCLEOTIDE SEQUENCE [LARGE SCALE GENOMIC DNA]</scope>
    <source>
        <strain>K279a</strain>
    </source>
</reference>
<name>SERC_STRMK</name>
<dbReference type="EC" id="2.6.1.52" evidence="1"/>
<dbReference type="EMBL" id="AM743169">
    <property type="protein sequence ID" value="CAQ46546.1"/>
    <property type="molecule type" value="Genomic_DNA"/>
</dbReference>
<dbReference type="RefSeq" id="WP_012480720.1">
    <property type="nucleotide sequence ID" value="NC_010943.1"/>
</dbReference>
<dbReference type="PDB" id="6XDK">
    <property type="method" value="X-ray"/>
    <property type="resolution" value="1.60 A"/>
    <property type="chains" value="A/B/C/D=1-361"/>
</dbReference>
<dbReference type="PDBsum" id="6XDK"/>
<dbReference type="SMR" id="B2FKF0"/>
<dbReference type="EnsemblBacteria" id="CAQ46546">
    <property type="protein sequence ID" value="CAQ46546"/>
    <property type="gene ID" value="Smlt3098"/>
</dbReference>
<dbReference type="KEGG" id="sml:Smlt3098"/>
<dbReference type="PATRIC" id="fig|522373.3.peg.2901"/>
<dbReference type="eggNOG" id="COG1932">
    <property type="taxonomic scope" value="Bacteria"/>
</dbReference>
<dbReference type="HOGENOM" id="CLU_034866_0_2_6"/>
<dbReference type="UniPathway" id="UPA00135">
    <property type="reaction ID" value="UER00197"/>
</dbReference>
<dbReference type="UniPathway" id="UPA00244">
    <property type="reaction ID" value="UER00311"/>
</dbReference>
<dbReference type="Proteomes" id="UP000008840">
    <property type="component" value="Chromosome"/>
</dbReference>
<dbReference type="GO" id="GO:0005737">
    <property type="term" value="C:cytoplasm"/>
    <property type="evidence" value="ECO:0007669"/>
    <property type="project" value="UniProtKB-SubCell"/>
</dbReference>
<dbReference type="GO" id="GO:0004648">
    <property type="term" value="F:O-phospho-L-serine:2-oxoglutarate aminotransferase activity"/>
    <property type="evidence" value="ECO:0007669"/>
    <property type="project" value="UniProtKB-UniRule"/>
</dbReference>
<dbReference type="GO" id="GO:0030170">
    <property type="term" value="F:pyridoxal phosphate binding"/>
    <property type="evidence" value="ECO:0007669"/>
    <property type="project" value="UniProtKB-UniRule"/>
</dbReference>
<dbReference type="GO" id="GO:0006564">
    <property type="term" value="P:L-serine biosynthetic process"/>
    <property type="evidence" value="ECO:0007669"/>
    <property type="project" value="UniProtKB-UniRule"/>
</dbReference>
<dbReference type="GO" id="GO:0008615">
    <property type="term" value="P:pyridoxine biosynthetic process"/>
    <property type="evidence" value="ECO:0007669"/>
    <property type="project" value="UniProtKB-UniRule"/>
</dbReference>
<dbReference type="FunFam" id="3.40.640.10:FF:000010">
    <property type="entry name" value="Phosphoserine aminotransferase"/>
    <property type="match status" value="1"/>
</dbReference>
<dbReference type="FunFam" id="3.90.1150.10:FF:000006">
    <property type="entry name" value="Phosphoserine aminotransferase"/>
    <property type="match status" value="1"/>
</dbReference>
<dbReference type="Gene3D" id="3.90.1150.10">
    <property type="entry name" value="Aspartate Aminotransferase, domain 1"/>
    <property type="match status" value="1"/>
</dbReference>
<dbReference type="Gene3D" id="3.40.640.10">
    <property type="entry name" value="Type I PLP-dependent aspartate aminotransferase-like (Major domain)"/>
    <property type="match status" value="1"/>
</dbReference>
<dbReference type="HAMAP" id="MF_00160">
    <property type="entry name" value="SerC_aminotrans_5"/>
    <property type="match status" value="1"/>
</dbReference>
<dbReference type="InterPro" id="IPR000192">
    <property type="entry name" value="Aminotrans_V_dom"/>
</dbReference>
<dbReference type="InterPro" id="IPR020578">
    <property type="entry name" value="Aminotrans_V_PyrdxlP_BS"/>
</dbReference>
<dbReference type="InterPro" id="IPR022278">
    <property type="entry name" value="Pser_aminoTfrase"/>
</dbReference>
<dbReference type="InterPro" id="IPR015424">
    <property type="entry name" value="PyrdxlP-dep_Trfase"/>
</dbReference>
<dbReference type="InterPro" id="IPR015421">
    <property type="entry name" value="PyrdxlP-dep_Trfase_major"/>
</dbReference>
<dbReference type="InterPro" id="IPR015422">
    <property type="entry name" value="PyrdxlP-dep_Trfase_small"/>
</dbReference>
<dbReference type="NCBIfam" id="NF003764">
    <property type="entry name" value="PRK05355.1"/>
    <property type="match status" value="1"/>
</dbReference>
<dbReference type="NCBIfam" id="TIGR01364">
    <property type="entry name" value="serC_1"/>
    <property type="match status" value="1"/>
</dbReference>
<dbReference type="PANTHER" id="PTHR43247">
    <property type="entry name" value="PHOSPHOSERINE AMINOTRANSFERASE"/>
    <property type="match status" value="1"/>
</dbReference>
<dbReference type="PANTHER" id="PTHR43247:SF1">
    <property type="entry name" value="PHOSPHOSERINE AMINOTRANSFERASE"/>
    <property type="match status" value="1"/>
</dbReference>
<dbReference type="Pfam" id="PF00266">
    <property type="entry name" value="Aminotran_5"/>
    <property type="match status" value="1"/>
</dbReference>
<dbReference type="PIRSF" id="PIRSF000525">
    <property type="entry name" value="SerC"/>
    <property type="match status" value="1"/>
</dbReference>
<dbReference type="SUPFAM" id="SSF53383">
    <property type="entry name" value="PLP-dependent transferases"/>
    <property type="match status" value="1"/>
</dbReference>
<dbReference type="PROSITE" id="PS00595">
    <property type="entry name" value="AA_TRANSFER_CLASS_5"/>
    <property type="match status" value="1"/>
</dbReference>
<evidence type="ECO:0000255" key="1">
    <source>
        <dbReference type="HAMAP-Rule" id="MF_00160"/>
    </source>
</evidence>
<evidence type="ECO:0007829" key="2">
    <source>
        <dbReference type="PDB" id="6XDK"/>
    </source>
</evidence>
<sequence length="361" mass="39037">MTRAFNFSAGPATLPESVLRQAQAEMLDWHGSGASIVEMSHRGAEFMSVAAEAEADLRRLLDIPDDYAVLFLSGGATTQQALIPLNFAAPGQRADYVVSGHWGKTAVKQAGVYVDVNIAASSEANGYRELPARADWQLSRDAAYVHITANETIHGVEFRDVPDTGNVPLIADFSSSIASEPLDVRRYGVIYAGAQKNLGPVGVAVMIIRRDLLERSGQPRADIFDYRSHVARDSMLNTPPTWNWYLAGLVFKWMLAEGGVTEFAKRNAAKAALVYGAIDGSGGFYRNEVAYAARSRMNIPFFLPDAELDARFVAEAKAAGLLALKGHKVVGGIRASLYNAMPLAGAEALVAFMADFQQRHG</sequence>
<proteinExistence type="evidence at protein level"/>
<gene>
    <name evidence="1" type="primary">serC</name>
    <name type="ordered locus">Smlt3098</name>
</gene>
<comment type="function">
    <text evidence="1">Catalyzes the reversible conversion of 3-phosphohydroxypyruvate to phosphoserine and of 3-hydroxy-2-oxo-4-phosphonooxybutanoate to phosphohydroxythreonine.</text>
</comment>
<comment type="catalytic activity">
    <reaction evidence="1">
        <text>O-phospho-L-serine + 2-oxoglutarate = 3-phosphooxypyruvate + L-glutamate</text>
        <dbReference type="Rhea" id="RHEA:14329"/>
        <dbReference type="ChEBI" id="CHEBI:16810"/>
        <dbReference type="ChEBI" id="CHEBI:18110"/>
        <dbReference type="ChEBI" id="CHEBI:29985"/>
        <dbReference type="ChEBI" id="CHEBI:57524"/>
        <dbReference type="EC" id="2.6.1.52"/>
    </reaction>
</comment>
<comment type="catalytic activity">
    <reaction evidence="1">
        <text>4-(phosphooxy)-L-threonine + 2-oxoglutarate = (R)-3-hydroxy-2-oxo-4-phosphooxybutanoate + L-glutamate</text>
        <dbReference type="Rhea" id="RHEA:16573"/>
        <dbReference type="ChEBI" id="CHEBI:16810"/>
        <dbReference type="ChEBI" id="CHEBI:29985"/>
        <dbReference type="ChEBI" id="CHEBI:58452"/>
        <dbReference type="ChEBI" id="CHEBI:58538"/>
        <dbReference type="EC" id="2.6.1.52"/>
    </reaction>
</comment>
<comment type="cofactor">
    <cofactor evidence="1">
        <name>pyridoxal 5'-phosphate</name>
        <dbReference type="ChEBI" id="CHEBI:597326"/>
    </cofactor>
    <text evidence="1">Binds 1 pyridoxal phosphate per subunit.</text>
</comment>
<comment type="pathway">
    <text evidence="1">Amino-acid biosynthesis; L-serine biosynthesis; L-serine from 3-phospho-D-glycerate: step 2/3.</text>
</comment>
<comment type="pathway">
    <text evidence="1">Cofactor biosynthesis; pyridoxine 5'-phosphate biosynthesis; pyridoxine 5'-phosphate from D-erythrose 4-phosphate: step 3/5.</text>
</comment>
<comment type="subunit">
    <text evidence="1">Homodimer.</text>
</comment>
<comment type="subcellular location">
    <subcellularLocation>
        <location evidence="1">Cytoplasm</location>
    </subcellularLocation>
</comment>
<comment type="similarity">
    <text evidence="1">Belongs to the class-V pyridoxal-phosphate-dependent aminotransferase family. SerC subfamily.</text>
</comment>
<protein>
    <recommendedName>
        <fullName evidence="1">Phosphoserine aminotransferase</fullName>
        <ecNumber evidence="1">2.6.1.52</ecNumber>
    </recommendedName>
    <alternativeName>
        <fullName evidence="1">Phosphohydroxythreonine aminotransferase</fullName>
        <shortName evidence="1">PSAT</shortName>
    </alternativeName>
</protein>
<accession>B2FKF0</accession>
<keyword id="KW-0002">3D-structure</keyword>
<keyword id="KW-0028">Amino-acid biosynthesis</keyword>
<keyword id="KW-0032">Aminotransferase</keyword>
<keyword id="KW-0963">Cytoplasm</keyword>
<keyword id="KW-0663">Pyridoxal phosphate</keyword>
<keyword id="KW-0664">Pyridoxine biosynthesis</keyword>
<keyword id="KW-1185">Reference proteome</keyword>
<keyword id="KW-0718">Serine biosynthesis</keyword>
<keyword id="KW-0808">Transferase</keyword>